<organism>
    <name type="scientific">Homo sapiens</name>
    <name type="common">Human</name>
    <dbReference type="NCBI Taxonomy" id="9606"/>
    <lineage>
        <taxon>Eukaryota</taxon>
        <taxon>Metazoa</taxon>
        <taxon>Chordata</taxon>
        <taxon>Craniata</taxon>
        <taxon>Vertebrata</taxon>
        <taxon>Euteleostomi</taxon>
        <taxon>Mammalia</taxon>
        <taxon>Eutheria</taxon>
        <taxon>Euarchontoglires</taxon>
        <taxon>Primates</taxon>
        <taxon>Haplorrhini</taxon>
        <taxon>Catarrhini</taxon>
        <taxon>Hominidae</taxon>
        <taxon>Homo</taxon>
    </lineage>
</organism>
<name>ANGL5_HUMAN</name>
<comment type="interaction">
    <interactant intactId="EBI-15485927">
        <id>Q86XS5</id>
    </interactant>
    <interactant intactId="EBI-2816428">
        <id>Q8N423</id>
        <label>LILRB2</label>
    </interactant>
    <organismsDiffer>false</organismsDiffer>
    <experiments>5</experiments>
</comment>
<comment type="subcellular location">
    <subcellularLocation>
        <location evidence="4">Secreted</location>
    </subcellularLocation>
</comment>
<comment type="tissue specificity">
    <text evidence="3">Mainly expressed in adult heart.</text>
</comment>
<feature type="signal peptide" evidence="1">
    <location>
        <begin position="1"/>
        <end position="25"/>
    </location>
</feature>
<feature type="chain" id="PRO_0000009127" description="Angiopoietin-related protein 5">
    <location>
        <begin position="26"/>
        <end position="388"/>
    </location>
</feature>
<feature type="domain" description="Fibrinogen C-terminal" evidence="2">
    <location>
        <begin position="141"/>
        <end position="383"/>
    </location>
</feature>
<feature type="coiled-coil region" evidence="1">
    <location>
        <begin position="98"/>
        <end position="123"/>
    </location>
</feature>
<feature type="glycosylation site" description="N-linked (GlcNAc...) asparagine" evidence="1">
    <location>
        <position position="53"/>
    </location>
</feature>
<feature type="glycosylation site" description="N-linked (GlcNAc...) asparagine" evidence="1">
    <location>
        <position position="238"/>
    </location>
</feature>
<feature type="glycosylation site" description="N-linked (GlcNAc...) asparagine" evidence="1">
    <location>
        <position position="329"/>
    </location>
</feature>
<feature type="disulfide bond" evidence="2">
    <location>
        <begin position="310"/>
        <end position="314"/>
    </location>
</feature>
<feature type="disulfide bond" evidence="2">
    <location>
        <begin position="324"/>
        <end position="338"/>
    </location>
</feature>
<feature type="sequence variant" id="VAR_055803" description="In dbSNP:rs7946238.">
    <original>S</original>
    <variation>P</variation>
    <location>
        <position position="175"/>
    </location>
</feature>
<feature type="sequence conflict" description="In Ref. 1; AAO38749, 2; AAQ89186, 3; BAF84212 and 5; AAH49170." evidence="4" ref="1 2 3 5">
    <original>R</original>
    <variation>W</variation>
    <location>
        <position position="192"/>
    </location>
</feature>
<feature type="sequence conflict" description="In Ref. 1; AAO38749." evidence="4" ref="1">
    <original>N</original>
    <variation>S</variation>
    <location>
        <position position="281"/>
    </location>
</feature>
<accession>Q86XS5</accession>
<accession>A8K658</accession>
<accession>Q86VR9</accession>
<reference key="1">
    <citation type="journal article" date="2003" name="J. Hum. Genet.">
        <title>Identification of a novel human angiopoietin-like gene expressed mainly in heart.</title>
        <authorList>
            <person name="Zeng L."/>
            <person name="Dai J."/>
            <person name="Ying K."/>
            <person name="Zhao E."/>
            <person name="Jin W."/>
            <person name="Ye Y."/>
            <person name="Dai J."/>
            <person name="Xu J."/>
            <person name="Xie Y."/>
            <person name="Mao Y."/>
        </authorList>
    </citation>
    <scope>NUCLEOTIDE SEQUENCE [MRNA]</scope>
    <scope>TISSUE SPECIFICITY</scope>
</reference>
<reference key="2">
    <citation type="journal article" date="2003" name="Genome Res.">
        <title>The secreted protein discovery initiative (SPDI), a large-scale effort to identify novel human secreted and transmembrane proteins: a bioinformatics assessment.</title>
        <authorList>
            <person name="Clark H.F."/>
            <person name="Gurney A.L."/>
            <person name="Abaya E."/>
            <person name="Baker K."/>
            <person name="Baldwin D.T."/>
            <person name="Brush J."/>
            <person name="Chen J."/>
            <person name="Chow B."/>
            <person name="Chui C."/>
            <person name="Crowley C."/>
            <person name="Currell B."/>
            <person name="Deuel B."/>
            <person name="Dowd P."/>
            <person name="Eaton D."/>
            <person name="Foster J.S."/>
            <person name="Grimaldi C."/>
            <person name="Gu Q."/>
            <person name="Hass P.E."/>
            <person name="Heldens S."/>
            <person name="Huang A."/>
            <person name="Kim H.S."/>
            <person name="Klimowski L."/>
            <person name="Jin Y."/>
            <person name="Johnson S."/>
            <person name="Lee J."/>
            <person name="Lewis L."/>
            <person name="Liao D."/>
            <person name="Mark M.R."/>
            <person name="Robbie E."/>
            <person name="Sanchez C."/>
            <person name="Schoenfeld J."/>
            <person name="Seshagiri S."/>
            <person name="Simmons L."/>
            <person name="Singh J."/>
            <person name="Smith V."/>
            <person name="Stinson J."/>
            <person name="Vagts A."/>
            <person name="Vandlen R.L."/>
            <person name="Watanabe C."/>
            <person name="Wieand D."/>
            <person name="Woods K."/>
            <person name="Xie M.-H."/>
            <person name="Yansura D.G."/>
            <person name="Yi S."/>
            <person name="Yu G."/>
            <person name="Yuan J."/>
            <person name="Zhang M."/>
            <person name="Zhang Z."/>
            <person name="Goddard A.D."/>
            <person name="Wood W.I."/>
            <person name="Godowski P.J."/>
            <person name="Gray A.M."/>
        </authorList>
    </citation>
    <scope>NUCLEOTIDE SEQUENCE [LARGE SCALE MRNA]</scope>
</reference>
<reference key="3">
    <citation type="journal article" date="2004" name="Nat. Genet.">
        <title>Complete sequencing and characterization of 21,243 full-length human cDNAs.</title>
        <authorList>
            <person name="Ota T."/>
            <person name="Suzuki Y."/>
            <person name="Nishikawa T."/>
            <person name="Otsuki T."/>
            <person name="Sugiyama T."/>
            <person name="Irie R."/>
            <person name="Wakamatsu A."/>
            <person name="Hayashi K."/>
            <person name="Sato H."/>
            <person name="Nagai K."/>
            <person name="Kimura K."/>
            <person name="Makita H."/>
            <person name="Sekine M."/>
            <person name="Obayashi M."/>
            <person name="Nishi T."/>
            <person name="Shibahara T."/>
            <person name="Tanaka T."/>
            <person name="Ishii S."/>
            <person name="Yamamoto J."/>
            <person name="Saito K."/>
            <person name="Kawai Y."/>
            <person name="Isono Y."/>
            <person name="Nakamura Y."/>
            <person name="Nagahari K."/>
            <person name="Murakami K."/>
            <person name="Yasuda T."/>
            <person name="Iwayanagi T."/>
            <person name="Wagatsuma M."/>
            <person name="Shiratori A."/>
            <person name="Sudo H."/>
            <person name="Hosoiri T."/>
            <person name="Kaku Y."/>
            <person name="Kodaira H."/>
            <person name="Kondo H."/>
            <person name="Sugawara M."/>
            <person name="Takahashi M."/>
            <person name="Kanda K."/>
            <person name="Yokoi T."/>
            <person name="Furuya T."/>
            <person name="Kikkawa E."/>
            <person name="Omura Y."/>
            <person name="Abe K."/>
            <person name="Kamihara K."/>
            <person name="Katsuta N."/>
            <person name="Sato K."/>
            <person name="Tanikawa M."/>
            <person name="Yamazaki M."/>
            <person name="Ninomiya K."/>
            <person name="Ishibashi T."/>
            <person name="Yamashita H."/>
            <person name="Murakawa K."/>
            <person name="Fujimori K."/>
            <person name="Tanai H."/>
            <person name="Kimata M."/>
            <person name="Watanabe M."/>
            <person name="Hiraoka S."/>
            <person name="Chiba Y."/>
            <person name="Ishida S."/>
            <person name="Ono Y."/>
            <person name="Takiguchi S."/>
            <person name="Watanabe S."/>
            <person name="Yosida M."/>
            <person name="Hotuta T."/>
            <person name="Kusano J."/>
            <person name="Kanehori K."/>
            <person name="Takahashi-Fujii A."/>
            <person name="Hara H."/>
            <person name="Tanase T.-O."/>
            <person name="Nomura Y."/>
            <person name="Togiya S."/>
            <person name="Komai F."/>
            <person name="Hara R."/>
            <person name="Takeuchi K."/>
            <person name="Arita M."/>
            <person name="Imose N."/>
            <person name="Musashino K."/>
            <person name="Yuuki H."/>
            <person name="Oshima A."/>
            <person name="Sasaki N."/>
            <person name="Aotsuka S."/>
            <person name="Yoshikawa Y."/>
            <person name="Matsunawa H."/>
            <person name="Ichihara T."/>
            <person name="Shiohata N."/>
            <person name="Sano S."/>
            <person name="Moriya S."/>
            <person name="Momiyama H."/>
            <person name="Satoh N."/>
            <person name="Takami S."/>
            <person name="Terashima Y."/>
            <person name="Suzuki O."/>
            <person name="Nakagawa S."/>
            <person name="Senoh A."/>
            <person name="Mizoguchi H."/>
            <person name="Goto Y."/>
            <person name="Shimizu F."/>
            <person name="Wakebe H."/>
            <person name="Hishigaki H."/>
            <person name="Watanabe T."/>
            <person name="Sugiyama A."/>
            <person name="Takemoto M."/>
            <person name="Kawakami B."/>
            <person name="Yamazaki M."/>
            <person name="Watanabe K."/>
            <person name="Kumagai A."/>
            <person name="Itakura S."/>
            <person name="Fukuzumi Y."/>
            <person name="Fujimori Y."/>
            <person name="Komiyama M."/>
            <person name="Tashiro H."/>
            <person name="Tanigami A."/>
            <person name="Fujiwara T."/>
            <person name="Ono T."/>
            <person name="Yamada K."/>
            <person name="Fujii Y."/>
            <person name="Ozaki K."/>
            <person name="Hirao M."/>
            <person name="Ohmori Y."/>
            <person name="Kawabata A."/>
            <person name="Hikiji T."/>
            <person name="Kobatake N."/>
            <person name="Inagaki H."/>
            <person name="Ikema Y."/>
            <person name="Okamoto S."/>
            <person name="Okitani R."/>
            <person name="Kawakami T."/>
            <person name="Noguchi S."/>
            <person name="Itoh T."/>
            <person name="Shigeta K."/>
            <person name="Senba T."/>
            <person name="Matsumura K."/>
            <person name="Nakajima Y."/>
            <person name="Mizuno T."/>
            <person name="Morinaga M."/>
            <person name="Sasaki M."/>
            <person name="Togashi T."/>
            <person name="Oyama M."/>
            <person name="Hata H."/>
            <person name="Watanabe M."/>
            <person name="Komatsu T."/>
            <person name="Mizushima-Sugano J."/>
            <person name="Satoh T."/>
            <person name="Shirai Y."/>
            <person name="Takahashi Y."/>
            <person name="Nakagawa K."/>
            <person name="Okumura K."/>
            <person name="Nagase T."/>
            <person name="Nomura N."/>
            <person name="Kikuchi H."/>
            <person name="Masuho Y."/>
            <person name="Yamashita R."/>
            <person name="Nakai K."/>
            <person name="Yada T."/>
            <person name="Nakamura Y."/>
            <person name="Ohara O."/>
            <person name="Isogai T."/>
            <person name="Sugano S."/>
        </authorList>
    </citation>
    <scope>NUCLEOTIDE SEQUENCE [LARGE SCALE MRNA]</scope>
    <source>
        <tissue>Pericardium</tissue>
    </source>
</reference>
<reference key="4">
    <citation type="journal article" date="2006" name="Nature">
        <title>Human chromosome 11 DNA sequence and analysis including novel gene identification.</title>
        <authorList>
            <person name="Taylor T.D."/>
            <person name="Noguchi H."/>
            <person name="Totoki Y."/>
            <person name="Toyoda A."/>
            <person name="Kuroki Y."/>
            <person name="Dewar K."/>
            <person name="Lloyd C."/>
            <person name="Itoh T."/>
            <person name="Takeda T."/>
            <person name="Kim D.-W."/>
            <person name="She X."/>
            <person name="Barlow K.F."/>
            <person name="Bloom T."/>
            <person name="Bruford E."/>
            <person name="Chang J.L."/>
            <person name="Cuomo C.A."/>
            <person name="Eichler E."/>
            <person name="FitzGerald M.G."/>
            <person name="Jaffe D.B."/>
            <person name="LaButti K."/>
            <person name="Nicol R."/>
            <person name="Park H.-S."/>
            <person name="Seaman C."/>
            <person name="Sougnez C."/>
            <person name="Yang X."/>
            <person name="Zimmer A.R."/>
            <person name="Zody M.C."/>
            <person name="Birren B.W."/>
            <person name="Nusbaum C."/>
            <person name="Fujiyama A."/>
            <person name="Hattori M."/>
            <person name="Rogers J."/>
            <person name="Lander E.S."/>
            <person name="Sakaki Y."/>
        </authorList>
    </citation>
    <scope>NUCLEOTIDE SEQUENCE [LARGE SCALE GENOMIC DNA]</scope>
</reference>
<reference key="5">
    <citation type="journal article" date="2004" name="Genome Res.">
        <title>The status, quality, and expansion of the NIH full-length cDNA project: the Mammalian Gene Collection (MGC).</title>
        <authorList>
            <consortium name="The MGC Project Team"/>
        </authorList>
    </citation>
    <scope>NUCLEOTIDE SEQUENCE [LARGE SCALE MRNA]</scope>
    <source>
        <tissue>Brain</tissue>
    </source>
</reference>
<protein>
    <recommendedName>
        <fullName>Angiopoietin-related protein 5</fullName>
    </recommendedName>
    <alternativeName>
        <fullName>Angiopoietin-like protein 5</fullName>
    </alternativeName>
</protein>
<proteinExistence type="evidence at protein level"/>
<evidence type="ECO:0000255" key="1"/>
<evidence type="ECO:0000255" key="2">
    <source>
        <dbReference type="PROSITE-ProRule" id="PRU00739"/>
    </source>
</evidence>
<evidence type="ECO:0000269" key="3">
    <source>
    </source>
</evidence>
<evidence type="ECO:0000305" key="4"/>
<gene>
    <name type="primary">ANGPTL5</name>
    <name type="ORF">UNQ5795/PRO19600</name>
</gene>
<sequence>MMSPSQASLLFLNVCIFICGEAVQGNCVHHSTDSSVVNIVEDGSNAKDESKSNDTVCKEDCEESCDVKTKITREEKHFMCRNLQNSIVSYTRSTKKLLRNMMDEQQASLDYLSNQVNELMNRVLLLTTEVFRKQLDPFPHRPVQSHGLDCTDIKDTIGSVTKTPSGLYIIHPEGSSYPFEVMCDMDYRGGGRTVIQKRIDGIIDFQRLWCDYLDGFGDLLGEFWLGLKKIFYIVNQKNTSFMLYVALESEDDTLAYASYDNFWLEDETRFFKMHLGRYSGNAGDAFRGLKKEDNQNAMPFSTSDVDNDGCRPACLVNGQSVKSCSHLHNKTGWWFNECGLANLNGIHHFSGKLLATGIQWGTWTKNNSPVKIKSVSMKIRRMYNPYFK</sequence>
<keyword id="KW-0175">Coiled coil</keyword>
<keyword id="KW-1015">Disulfide bond</keyword>
<keyword id="KW-0325">Glycoprotein</keyword>
<keyword id="KW-1267">Proteomics identification</keyword>
<keyword id="KW-1185">Reference proteome</keyword>
<keyword id="KW-0964">Secreted</keyword>
<keyword id="KW-0732">Signal</keyword>
<dbReference type="EMBL" id="AY169281">
    <property type="protein sequence ID" value="AAO38749.1"/>
    <property type="molecule type" value="mRNA"/>
</dbReference>
<dbReference type="EMBL" id="AY358827">
    <property type="protein sequence ID" value="AAQ89186.1"/>
    <property type="molecule type" value="mRNA"/>
</dbReference>
<dbReference type="EMBL" id="AK291523">
    <property type="protein sequence ID" value="BAF84212.1"/>
    <property type="molecule type" value="mRNA"/>
</dbReference>
<dbReference type="EMBL" id="AP003383">
    <property type="status" value="NOT_ANNOTATED_CDS"/>
    <property type="molecule type" value="Genomic_DNA"/>
</dbReference>
<dbReference type="EMBL" id="BC049170">
    <property type="protein sequence ID" value="AAH49170.1"/>
    <property type="molecule type" value="mRNA"/>
</dbReference>
<dbReference type="CCDS" id="CCDS8312.1"/>
<dbReference type="RefSeq" id="NP_835228.2">
    <property type="nucleotide sequence ID" value="NM_178127.5"/>
</dbReference>
<dbReference type="SMR" id="Q86XS5"/>
<dbReference type="BioGRID" id="128996">
    <property type="interactions" value="1"/>
</dbReference>
<dbReference type="DIP" id="DIP-59887N"/>
<dbReference type="FunCoup" id="Q86XS5">
    <property type="interactions" value="35"/>
</dbReference>
<dbReference type="IntAct" id="Q86XS5">
    <property type="interactions" value="3"/>
</dbReference>
<dbReference type="STRING" id="9606.ENSP00000335255"/>
<dbReference type="GlyCosmos" id="Q86XS5">
    <property type="glycosylation" value="3 sites, No reported glycans"/>
</dbReference>
<dbReference type="GlyGen" id="Q86XS5">
    <property type="glycosylation" value="5 sites, 1 O-linked glycan (2 sites)"/>
</dbReference>
<dbReference type="iPTMnet" id="Q86XS5"/>
<dbReference type="PhosphoSitePlus" id="Q86XS5"/>
<dbReference type="BioMuta" id="ANGPTL5"/>
<dbReference type="DMDM" id="296439430"/>
<dbReference type="MassIVE" id="Q86XS5"/>
<dbReference type="PaxDb" id="9606-ENSP00000335255"/>
<dbReference type="PeptideAtlas" id="Q86XS5"/>
<dbReference type="Antibodypedia" id="31728">
    <property type="antibodies" value="182 antibodies from 30 providers"/>
</dbReference>
<dbReference type="DNASU" id="253935"/>
<dbReference type="Ensembl" id="ENST00000334289.7">
    <property type="protein sequence ID" value="ENSP00000335255.3"/>
    <property type="gene ID" value="ENSG00000187151.7"/>
</dbReference>
<dbReference type="GeneID" id="253935"/>
<dbReference type="KEGG" id="hsa:253935"/>
<dbReference type="MANE-Select" id="ENST00000334289.7">
    <property type="protein sequence ID" value="ENSP00000335255.3"/>
    <property type="RefSeq nucleotide sequence ID" value="NM_178127.5"/>
    <property type="RefSeq protein sequence ID" value="NP_835228.2"/>
</dbReference>
<dbReference type="UCSC" id="uc001pgl.3">
    <property type="organism name" value="human"/>
</dbReference>
<dbReference type="AGR" id="HGNC:19705"/>
<dbReference type="CTD" id="253935"/>
<dbReference type="DisGeNET" id="253935"/>
<dbReference type="GeneCards" id="ANGPTL5"/>
<dbReference type="HGNC" id="HGNC:19705">
    <property type="gene designation" value="ANGPTL5"/>
</dbReference>
<dbReference type="HPA" id="ENSG00000187151">
    <property type="expression patterns" value="Tissue enhanced (breast, ovary)"/>
</dbReference>
<dbReference type="MIM" id="607666">
    <property type="type" value="gene"/>
</dbReference>
<dbReference type="neXtProt" id="NX_Q86XS5"/>
<dbReference type="OpenTargets" id="ENSG00000187151"/>
<dbReference type="PharmGKB" id="PA134944139"/>
<dbReference type="VEuPathDB" id="HostDB:ENSG00000187151"/>
<dbReference type="eggNOG" id="KOG2579">
    <property type="taxonomic scope" value="Eukaryota"/>
</dbReference>
<dbReference type="GeneTree" id="ENSGT00940000161966"/>
<dbReference type="HOGENOM" id="CLU_038628_3_2_1"/>
<dbReference type="InParanoid" id="Q86XS5"/>
<dbReference type="OMA" id="EKHSICG"/>
<dbReference type="OrthoDB" id="7940501at2759"/>
<dbReference type="PAN-GO" id="Q86XS5">
    <property type="GO annotations" value="2 GO annotations based on evolutionary models"/>
</dbReference>
<dbReference type="PhylomeDB" id="Q86XS5"/>
<dbReference type="TreeFam" id="TF351983"/>
<dbReference type="PathwayCommons" id="Q86XS5"/>
<dbReference type="SignaLink" id="Q86XS5"/>
<dbReference type="BioGRID-ORCS" id="253935">
    <property type="hits" value="64 hits in 1139 CRISPR screens"/>
</dbReference>
<dbReference type="ChiTaRS" id="ANGPTL5">
    <property type="organism name" value="human"/>
</dbReference>
<dbReference type="GenomeRNAi" id="253935"/>
<dbReference type="Pharos" id="Q86XS5">
    <property type="development level" value="Tbio"/>
</dbReference>
<dbReference type="PRO" id="PR:Q86XS5"/>
<dbReference type="Proteomes" id="UP000005640">
    <property type="component" value="Chromosome 11"/>
</dbReference>
<dbReference type="RNAct" id="Q86XS5">
    <property type="molecule type" value="protein"/>
</dbReference>
<dbReference type="Bgee" id="ENSG00000187151">
    <property type="expression patterns" value="Expressed in calcaneal tendon and 77 other cell types or tissues"/>
</dbReference>
<dbReference type="ExpressionAtlas" id="Q86XS5">
    <property type="expression patterns" value="baseline and differential"/>
</dbReference>
<dbReference type="GO" id="GO:0062023">
    <property type="term" value="C:collagen-containing extracellular matrix"/>
    <property type="evidence" value="ECO:0000318"/>
    <property type="project" value="GO_Central"/>
</dbReference>
<dbReference type="GO" id="GO:0005615">
    <property type="term" value="C:extracellular space"/>
    <property type="evidence" value="ECO:0000318"/>
    <property type="project" value="GO_Central"/>
</dbReference>
<dbReference type="CDD" id="cd00087">
    <property type="entry name" value="FReD"/>
    <property type="match status" value="1"/>
</dbReference>
<dbReference type="Gene3D" id="3.90.215.10">
    <property type="entry name" value="Gamma Fibrinogen, chain A, domain 1"/>
    <property type="match status" value="1"/>
</dbReference>
<dbReference type="InterPro" id="IPR036056">
    <property type="entry name" value="Fibrinogen-like_C"/>
</dbReference>
<dbReference type="InterPro" id="IPR014716">
    <property type="entry name" value="Fibrinogen_a/b/g_C_1"/>
</dbReference>
<dbReference type="InterPro" id="IPR002181">
    <property type="entry name" value="Fibrinogen_a/b/g_C_dom"/>
</dbReference>
<dbReference type="InterPro" id="IPR050373">
    <property type="entry name" value="Fibrinogen_C-term_domain"/>
</dbReference>
<dbReference type="InterPro" id="IPR020837">
    <property type="entry name" value="Fibrinogen_CS"/>
</dbReference>
<dbReference type="NCBIfam" id="NF040941">
    <property type="entry name" value="GGGWT_bact"/>
    <property type="match status" value="1"/>
</dbReference>
<dbReference type="PANTHER" id="PTHR19143:SF185">
    <property type="entry name" value="ANGIOPOIETIN-RELATED PROTEIN 5"/>
    <property type="match status" value="1"/>
</dbReference>
<dbReference type="PANTHER" id="PTHR19143">
    <property type="entry name" value="FIBRINOGEN/TENASCIN/ANGIOPOEITIN"/>
    <property type="match status" value="1"/>
</dbReference>
<dbReference type="Pfam" id="PF00147">
    <property type="entry name" value="Fibrinogen_C"/>
    <property type="match status" value="1"/>
</dbReference>
<dbReference type="SMART" id="SM00186">
    <property type="entry name" value="FBG"/>
    <property type="match status" value="1"/>
</dbReference>
<dbReference type="SUPFAM" id="SSF56496">
    <property type="entry name" value="Fibrinogen C-terminal domain-like"/>
    <property type="match status" value="1"/>
</dbReference>
<dbReference type="PROSITE" id="PS00514">
    <property type="entry name" value="FIBRINOGEN_C_1"/>
    <property type="match status" value="1"/>
</dbReference>
<dbReference type="PROSITE" id="PS51406">
    <property type="entry name" value="FIBRINOGEN_C_2"/>
    <property type="match status" value="1"/>
</dbReference>